<protein>
    <recommendedName>
        <fullName evidence="3">Arminin 2a</fullName>
    </recommendedName>
</protein>
<accession>D2XUU7</accession>
<comment type="function">
    <text evidence="1">Antimicrobial peptide with a broad-spectrum antimicrobial activity. Keeps its antibacterial activity under a wide range of salt concentrations that mimic physiological conditions of human blood, which is surprising, since Hydra is an obligate freshwater animal with nearly no salt tolerance. Does not affect red blood cells.</text>
</comment>
<comment type="subcellular location">
    <subcellularLocation>
        <location evidence="1">Secreted</location>
    </subcellularLocation>
    <subcellularLocation>
        <location evidence="1">Target cell membrane</location>
    </subcellularLocation>
</comment>
<comment type="tissue specificity">
    <text evidence="1">Expressed in entodermal epithelium along the body column.</text>
</comment>
<comment type="similarity">
    <text evidence="4">Belongs to the arminin family.</text>
</comment>
<feature type="signal peptide" evidence="2">
    <location>
        <begin position="1"/>
        <end position="18"/>
    </location>
</feature>
<feature type="propeptide" id="PRO_0000461968" evidence="1">
    <location>
        <begin position="19"/>
        <end position="57"/>
    </location>
</feature>
<feature type="peptide" id="PRO_5003038834" description="Arminin 2a" evidence="1">
    <location>
        <begin position="58"/>
        <end position="78"/>
    </location>
</feature>
<feature type="modified residue" description="Alanine amide" evidence="1">
    <location>
        <position position="78"/>
    </location>
</feature>
<dbReference type="EMBL" id="GU256277">
    <property type="protein sequence ID" value="ADB56980.1"/>
    <property type="molecule type" value="mRNA"/>
</dbReference>
<dbReference type="Proteomes" id="UP000694840">
    <property type="component" value="Unplaced"/>
</dbReference>
<dbReference type="GO" id="GO:0005576">
    <property type="term" value="C:extracellular region"/>
    <property type="evidence" value="ECO:0007669"/>
    <property type="project" value="UniProtKB-SubCell"/>
</dbReference>
<reference evidence="5" key="1">
    <citation type="journal article" date="2009" name="Antimicrob. Agents Chemother.">
        <title>Activity of the novel peptide arminin against multiresistant human pathogens shows the considerable potential of phylogenetically ancient organisms as drug sources.</title>
        <authorList>
            <person name="Augustin R."/>
            <person name="Anton-Erxleben F."/>
            <person name="Jungnickel S."/>
            <person name="Hemmrich G."/>
            <person name="Spudy B."/>
            <person name="Podschun R."/>
            <person name="Bosch T.C."/>
        </authorList>
    </citation>
    <scope>NUCLEOTIDE SEQUENCE [MRNA]</scope>
    <source>
        <strain>AEP</strain>
    </source>
</reference>
<name>ARM2A_HYDVU</name>
<proteinExistence type="inferred from homology"/>
<sequence length="81" mass="9835">MKTVFAILFLAFIALTYARSYEDVKEEIKNEVVKEILEDLEEESDELDDKSKEINDAKPYRWLRNKWWRRIRPDIRMAGKK</sequence>
<evidence type="ECO:0000250" key="1">
    <source>
        <dbReference type="UniProtKB" id="D2XUU4"/>
    </source>
</evidence>
<evidence type="ECO:0000255" key="2"/>
<evidence type="ECO:0000303" key="3">
    <source>
    </source>
</evidence>
<evidence type="ECO:0000305" key="4"/>
<evidence type="ECO:0000312" key="5">
    <source>
        <dbReference type="EMBL" id="ADB56980.1"/>
    </source>
</evidence>
<organism>
    <name type="scientific">Hydra vulgaris</name>
    <name type="common">Hydra</name>
    <name type="synonym">Hydra attenuata</name>
    <dbReference type="NCBI Taxonomy" id="6087"/>
    <lineage>
        <taxon>Eukaryota</taxon>
        <taxon>Metazoa</taxon>
        <taxon>Cnidaria</taxon>
        <taxon>Hydrozoa</taxon>
        <taxon>Hydroidolina</taxon>
        <taxon>Anthoathecata</taxon>
        <taxon>Aplanulata</taxon>
        <taxon>Hydridae</taxon>
        <taxon>Hydra</taxon>
    </lineage>
</organism>
<keyword id="KW-0027">Amidation</keyword>
<keyword id="KW-0044">Antibiotic</keyword>
<keyword id="KW-0929">Antimicrobial</keyword>
<keyword id="KW-0391">Immunity</keyword>
<keyword id="KW-0399">Innate immunity</keyword>
<keyword id="KW-0472">Membrane</keyword>
<keyword id="KW-1185">Reference proteome</keyword>
<keyword id="KW-0964">Secreted</keyword>
<keyword id="KW-0732">Signal</keyword>
<keyword id="KW-1052">Target cell membrane</keyword>
<keyword id="KW-1053">Target membrane</keyword>